<name>14332_PSEMZ</name>
<proteinExistence type="evidence at protein level"/>
<feature type="chain" id="PRO_0000347315" description="14-3-3-like protein 2">
    <location>
        <begin position="1" status="less than"/>
        <end position="66" status="greater than"/>
    </location>
</feature>
<feature type="non-consecutive residues" evidence="3">
    <location>
        <begin position="17"/>
        <end position="18"/>
    </location>
</feature>
<feature type="non-consecutive residues" evidence="3">
    <location>
        <begin position="25"/>
        <end position="26"/>
    </location>
</feature>
<feature type="non-consecutive residues" evidence="3">
    <location>
        <begin position="37"/>
        <end position="38"/>
    </location>
</feature>
<feature type="non-terminal residue" evidence="3">
    <location>
        <position position="1"/>
    </location>
</feature>
<feature type="non-terminal residue" evidence="3">
    <location>
        <position position="66"/>
    </location>
</feature>
<reference key="1">
    <citation type="journal article" date="2008" name="J. Proteomics">
        <title>A proteomics approach to identify proteins differentially expressed in Douglas-fir seedlings infected by Phellinus sulphurascens.</title>
        <authorList>
            <person name="Islam M.A."/>
            <person name="Sturrock R.N."/>
            <person name="Ekramoddoullah A.K.M."/>
        </authorList>
    </citation>
    <scope>IDENTIFICATION BY MASS SPECTROMETRY</scope>
</reference>
<evidence type="ECO:0000250" key="1">
    <source>
        <dbReference type="UniProtKB" id="P93211"/>
    </source>
</evidence>
<evidence type="ECO:0000255" key="2"/>
<evidence type="ECO:0000303" key="3">
    <source>
    </source>
</evidence>
<organism>
    <name type="scientific">Pseudotsuga menziesii</name>
    <name type="common">Douglas-fir</name>
    <name type="synonym">Abies menziesii</name>
    <dbReference type="NCBI Taxonomy" id="3357"/>
    <lineage>
        <taxon>Eukaryota</taxon>
        <taxon>Viridiplantae</taxon>
        <taxon>Streptophyta</taxon>
        <taxon>Embryophyta</taxon>
        <taxon>Tracheophyta</taxon>
        <taxon>Spermatophyta</taxon>
        <taxon>Pinopsida</taxon>
        <taxon>Pinidae</taxon>
        <taxon>Conifers I</taxon>
        <taxon>Pinales</taxon>
        <taxon>Pinaceae</taxon>
        <taxon>Pseudotsuga</taxon>
    </lineage>
</organism>
<dbReference type="SMR" id="P85939"/>
<dbReference type="Gene3D" id="1.20.190.20">
    <property type="entry name" value="14-3-3 domain"/>
    <property type="match status" value="2"/>
</dbReference>
<dbReference type="InterPro" id="IPR000308">
    <property type="entry name" value="14-3-3"/>
</dbReference>
<dbReference type="InterPro" id="IPR036815">
    <property type="entry name" value="14-3-3_dom_sf"/>
</dbReference>
<dbReference type="InterPro" id="IPR023410">
    <property type="entry name" value="14-3-3_domain"/>
</dbReference>
<dbReference type="PANTHER" id="PTHR18860">
    <property type="entry name" value="14-3-3 PROTEIN"/>
    <property type="match status" value="1"/>
</dbReference>
<dbReference type="Pfam" id="PF00244">
    <property type="entry name" value="14-3-3"/>
    <property type="match status" value="1"/>
</dbReference>
<dbReference type="PRINTS" id="PR00305">
    <property type="entry name" value="1433ZETA"/>
</dbReference>
<dbReference type="SUPFAM" id="SSF48445">
    <property type="entry name" value="14-3-3 protein"/>
    <property type="match status" value="1"/>
</dbReference>
<comment type="similarity">
    <text evidence="2">Belongs to the 14-3-3 family.</text>
</comment>
<sequence>LAEQAERYEEMVEYMEKNLLSVAYKIISSIEQKEESRQAFDEAIAELDTLGEESYKDSTLIMQLLR</sequence>
<accession>P85939</accession>
<protein>
    <recommendedName>
        <fullName evidence="1">14-3-3-like protein 2</fullName>
    </recommendedName>
</protein>